<evidence type="ECO:0000255" key="1">
    <source>
        <dbReference type="HAMAP-Rule" id="MF_01414"/>
    </source>
</evidence>
<comment type="function">
    <text evidence="1">Regulatory subunit of a potassium efflux system that confers protection against electrophiles. Required for full activity of KefC. Shows redox enzymatic activity, but this enzymatic activity is not required for activation of KefC.</text>
</comment>
<comment type="catalytic activity">
    <reaction evidence="1">
        <text>a quinone + NADH + H(+) = a quinol + NAD(+)</text>
        <dbReference type="Rhea" id="RHEA:46160"/>
        <dbReference type="ChEBI" id="CHEBI:15378"/>
        <dbReference type="ChEBI" id="CHEBI:24646"/>
        <dbReference type="ChEBI" id="CHEBI:57540"/>
        <dbReference type="ChEBI" id="CHEBI:57945"/>
        <dbReference type="ChEBI" id="CHEBI:132124"/>
        <dbReference type="EC" id="1.6.5.2"/>
    </reaction>
</comment>
<comment type="catalytic activity">
    <reaction evidence="1">
        <text>a quinone + NADPH + H(+) = a quinol + NADP(+)</text>
        <dbReference type="Rhea" id="RHEA:46164"/>
        <dbReference type="ChEBI" id="CHEBI:15378"/>
        <dbReference type="ChEBI" id="CHEBI:24646"/>
        <dbReference type="ChEBI" id="CHEBI:57783"/>
        <dbReference type="ChEBI" id="CHEBI:58349"/>
        <dbReference type="ChEBI" id="CHEBI:132124"/>
        <dbReference type="EC" id="1.6.5.2"/>
    </reaction>
</comment>
<comment type="cofactor">
    <cofactor evidence="1">
        <name>FMN</name>
        <dbReference type="ChEBI" id="CHEBI:58210"/>
    </cofactor>
</comment>
<comment type="subunit">
    <text evidence="1">Homodimer. Interacts with KefC.</text>
</comment>
<comment type="subcellular location">
    <subcellularLocation>
        <location evidence="1">Cell inner membrane</location>
        <topology evidence="1">Peripheral membrane protein</topology>
        <orientation evidence="1">Cytoplasmic side</orientation>
    </subcellularLocation>
</comment>
<comment type="similarity">
    <text evidence="1">Belongs to the NAD(P)H dehydrogenase (quinone) family. KefF subfamily.</text>
</comment>
<proteinExistence type="inferred from homology"/>
<protein>
    <recommendedName>
        <fullName evidence="1">Glutathione-regulated potassium-efflux system ancillary protein KefF</fullName>
    </recommendedName>
    <alternativeName>
        <fullName evidence="1">Quinone oxidoreductase KefF</fullName>
        <ecNumber evidence="1">1.6.5.2</ecNumber>
    </alternativeName>
</protein>
<keyword id="KW-0997">Cell inner membrane</keyword>
<keyword id="KW-1003">Cell membrane</keyword>
<keyword id="KW-0285">Flavoprotein</keyword>
<keyword id="KW-0288">FMN</keyword>
<keyword id="KW-0472">Membrane</keyword>
<keyword id="KW-0520">NAD</keyword>
<keyword id="KW-0560">Oxidoreductase</keyword>
<keyword id="KW-1185">Reference proteome</keyword>
<dbReference type="EC" id="1.6.5.2" evidence="1"/>
<dbReference type="EMBL" id="CP000034">
    <property type="protein sequence ID" value="ABB60307.1"/>
    <property type="molecule type" value="Genomic_DNA"/>
</dbReference>
<dbReference type="RefSeq" id="WP_000600719.1">
    <property type="nucleotide sequence ID" value="NC_007606.1"/>
</dbReference>
<dbReference type="RefSeq" id="YP_401796.1">
    <property type="nucleotide sequence ID" value="NC_007606.1"/>
</dbReference>
<dbReference type="SMR" id="Q32K50"/>
<dbReference type="STRING" id="300267.SDY_0069"/>
<dbReference type="EnsemblBacteria" id="ABB60307">
    <property type="protein sequence ID" value="ABB60307"/>
    <property type="gene ID" value="SDY_0069"/>
</dbReference>
<dbReference type="KEGG" id="sdy:SDY_0069"/>
<dbReference type="PATRIC" id="fig|300267.13.peg.79"/>
<dbReference type="HOGENOM" id="CLU_058643_0_1_6"/>
<dbReference type="Proteomes" id="UP000002716">
    <property type="component" value="Chromosome"/>
</dbReference>
<dbReference type="GO" id="GO:0005886">
    <property type="term" value="C:plasma membrane"/>
    <property type="evidence" value="ECO:0007669"/>
    <property type="project" value="UniProtKB-SubCell"/>
</dbReference>
<dbReference type="GO" id="GO:0009055">
    <property type="term" value="F:electron transfer activity"/>
    <property type="evidence" value="ECO:0007669"/>
    <property type="project" value="TreeGrafter"/>
</dbReference>
<dbReference type="GO" id="GO:0010181">
    <property type="term" value="F:FMN binding"/>
    <property type="evidence" value="ECO:0007669"/>
    <property type="project" value="UniProtKB-UniRule"/>
</dbReference>
<dbReference type="GO" id="GO:0050136">
    <property type="term" value="F:NADH:ubiquinone reductase (non-electrogenic) activity"/>
    <property type="evidence" value="ECO:0007669"/>
    <property type="project" value="RHEA"/>
</dbReference>
<dbReference type="GO" id="GO:0008753">
    <property type="term" value="F:NADPH dehydrogenase (quinone) activity"/>
    <property type="evidence" value="ECO:0007669"/>
    <property type="project" value="RHEA"/>
</dbReference>
<dbReference type="GO" id="GO:1901381">
    <property type="term" value="P:positive regulation of potassium ion transmembrane transport"/>
    <property type="evidence" value="ECO:0007669"/>
    <property type="project" value="UniProtKB-UniRule"/>
</dbReference>
<dbReference type="GO" id="GO:0006813">
    <property type="term" value="P:potassium ion transport"/>
    <property type="evidence" value="ECO:0007669"/>
    <property type="project" value="InterPro"/>
</dbReference>
<dbReference type="FunFam" id="3.40.50.360:FF:000008">
    <property type="entry name" value="Glutathione-regulated potassium-efflux system ancillary protein KefF"/>
    <property type="match status" value="1"/>
</dbReference>
<dbReference type="Gene3D" id="3.40.50.360">
    <property type="match status" value="1"/>
</dbReference>
<dbReference type="HAMAP" id="MF_01414">
    <property type="entry name" value="K_H_efflux_KefF"/>
    <property type="match status" value="1"/>
</dbReference>
<dbReference type="InterPro" id="IPR003680">
    <property type="entry name" value="Flavodoxin_fold"/>
</dbReference>
<dbReference type="InterPro" id="IPR029039">
    <property type="entry name" value="Flavoprotein-like_sf"/>
</dbReference>
<dbReference type="InterPro" id="IPR023948">
    <property type="entry name" value="K_H_efflux_KefF"/>
</dbReference>
<dbReference type="InterPro" id="IPR046980">
    <property type="entry name" value="KefG/KefF"/>
</dbReference>
<dbReference type="NCBIfam" id="NF002044">
    <property type="entry name" value="PRK00871.1"/>
    <property type="match status" value="1"/>
</dbReference>
<dbReference type="PANTHER" id="PTHR47307:SF2">
    <property type="entry name" value="GLUTATHIONE-REGULATED POTASSIUM-EFFLUX SYSTEM ANCILLARY PROTEIN KEFF"/>
    <property type="match status" value="1"/>
</dbReference>
<dbReference type="PANTHER" id="PTHR47307">
    <property type="entry name" value="GLUTATHIONE-REGULATED POTASSIUM-EFFLUX SYSTEM ANCILLARY PROTEIN KEFG"/>
    <property type="match status" value="1"/>
</dbReference>
<dbReference type="Pfam" id="PF02525">
    <property type="entry name" value="Flavodoxin_2"/>
    <property type="match status" value="1"/>
</dbReference>
<dbReference type="SUPFAM" id="SSF52218">
    <property type="entry name" value="Flavoproteins"/>
    <property type="match status" value="1"/>
</dbReference>
<feature type="chain" id="PRO_1000068471" description="Glutathione-regulated potassium-efflux system ancillary protein KefF">
    <location>
        <begin position="1"/>
        <end position="176"/>
    </location>
</feature>
<feature type="binding site" evidence="1">
    <location>
        <position position="8"/>
    </location>
    <ligand>
        <name>FMN</name>
        <dbReference type="ChEBI" id="CHEBI:58210"/>
    </ligand>
</feature>
<feature type="binding site" evidence="1">
    <location>
        <begin position="14"/>
        <end position="17"/>
    </location>
    <ligand>
        <name>FMN</name>
        <dbReference type="ChEBI" id="CHEBI:58210"/>
    </ligand>
</feature>
<feature type="binding site" evidence="1">
    <location>
        <begin position="65"/>
        <end position="68"/>
    </location>
    <ligand>
        <name>FMN</name>
        <dbReference type="ChEBI" id="CHEBI:58210"/>
    </ligand>
</feature>
<feature type="binding site" evidence="1">
    <location>
        <begin position="105"/>
        <end position="108"/>
    </location>
    <ligand>
        <name>FMN</name>
        <dbReference type="ChEBI" id="CHEBI:58210"/>
    </ligand>
</feature>
<organism>
    <name type="scientific">Shigella dysenteriae serotype 1 (strain Sd197)</name>
    <dbReference type="NCBI Taxonomy" id="300267"/>
    <lineage>
        <taxon>Bacteria</taxon>
        <taxon>Pseudomonadati</taxon>
        <taxon>Pseudomonadota</taxon>
        <taxon>Gammaproteobacteria</taxon>
        <taxon>Enterobacterales</taxon>
        <taxon>Enterobacteriaceae</taxon>
        <taxon>Shigella</taxon>
    </lineage>
</organism>
<sequence>MILIIYAHPYPHHSHANKRMLEQARTLDGVEIRSLYQLYPDFNIDIAAEQEALSRADLIVWQHPMQWYSIPPLLKLWIDKVLSHGWAYGHGGTAPRGKHLLWAVTTGGGESHFEIGAHPGFDVLSQPLQATAIYCGLNWLPPFAMHCTFICDDETLEGQARHYKQRLLEWQEAHHG</sequence>
<gene>
    <name evidence="1" type="primary">kefF</name>
    <name type="ordered locus">SDY_0069</name>
</gene>
<name>KEFF_SHIDS</name>
<accession>Q32K50</accession>
<reference key="1">
    <citation type="journal article" date="2005" name="Nucleic Acids Res.">
        <title>Genome dynamics and diversity of Shigella species, the etiologic agents of bacillary dysentery.</title>
        <authorList>
            <person name="Yang F."/>
            <person name="Yang J."/>
            <person name="Zhang X."/>
            <person name="Chen L."/>
            <person name="Jiang Y."/>
            <person name="Yan Y."/>
            <person name="Tang X."/>
            <person name="Wang J."/>
            <person name="Xiong Z."/>
            <person name="Dong J."/>
            <person name="Xue Y."/>
            <person name="Zhu Y."/>
            <person name="Xu X."/>
            <person name="Sun L."/>
            <person name="Chen S."/>
            <person name="Nie H."/>
            <person name="Peng J."/>
            <person name="Xu J."/>
            <person name="Wang Y."/>
            <person name="Yuan Z."/>
            <person name="Wen Y."/>
            <person name="Yao Z."/>
            <person name="Shen Y."/>
            <person name="Qiang B."/>
            <person name="Hou Y."/>
            <person name="Yu J."/>
            <person name="Jin Q."/>
        </authorList>
    </citation>
    <scope>NUCLEOTIDE SEQUENCE [LARGE SCALE GENOMIC DNA]</scope>
    <source>
        <strain>Sd197</strain>
    </source>
</reference>